<feature type="chain" id="PRO_0000303604" description="tRNA N6-adenosine threonylcarbamoyltransferase">
    <location>
        <begin position="1"/>
        <end position="401"/>
    </location>
</feature>
<feature type="binding site" evidence="1">
    <location>
        <position position="111"/>
    </location>
    <ligand>
        <name>Fe cation</name>
        <dbReference type="ChEBI" id="CHEBI:24875"/>
    </ligand>
</feature>
<feature type="binding site" evidence="1">
    <location>
        <position position="115"/>
    </location>
    <ligand>
        <name>Fe cation</name>
        <dbReference type="ChEBI" id="CHEBI:24875"/>
    </ligand>
</feature>
<feature type="binding site" evidence="1">
    <location>
        <begin position="191"/>
        <end position="195"/>
    </location>
    <ligand>
        <name>substrate</name>
    </ligand>
</feature>
<feature type="binding site" evidence="1">
    <location>
        <position position="223"/>
    </location>
    <ligand>
        <name>substrate</name>
    </ligand>
</feature>
<feature type="binding site" evidence="1">
    <location>
        <position position="236"/>
    </location>
    <ligand>
        <name>substrate</name>
    </ligand>
</feature>
<feature type="binding site" evidence="1">
    <location>
        <position position="336"/>
    </location>
    <ligand>
        <name>substrate</name>
    </ligand>
</feature>
<feature type="binding site" evidence="1">
    <location>
        <position position="364"/>
    </location>
    <ligand>
        <name>Fe cation</name>
        <dbReference type="ChEBI" id="CHEBI:24875"/>
    </ligand>
</feature>
<gene>
    <name evidence="1" type="primary">tsaD</name>
    <name type="synonym">gcp</name>
    <name type="ordered locus">TWT_591</name>
</gene>
<reference key="1">
    <citation type="journal article" date="2003" name="Genome Res.">
        <title>Tropheryma whipplei twist: a human pathogenic Actinobacteria with a reduced genome.</title>
        <authorList>
            <person name="Raoult D."/>
            <person name="Ogata H."/>
            <person name="Audic S."/>
            <person name="Robert C."/>
            <person name="Suhre K."/>
            <person name="Drancourt M."/>
            <person name="Claverie J.-M."/>
        </authorList>
    </citation>
    <scope>NUCLEOTIDE SEQUENCE [LARGE SCALE GENOMIC DNA]</scope>
    <source>
        <strain>Twist</strain>
    </source>
</reference>
<comment type="function">
    <text evidence="1">Required for the formation of a threonylcarbamoyl group on adenosine at position 37 (t(6)A37) in tRNAs that read codons beginning with adenine. Is involved in the transfer of the threonylcarbamoyl moiety of threonylcarbamoyl-AMP (TC-AMP) to the N6 group of A37, together with TsaE and TsaB. TsaD likely plays a direct catalytic role in this reaction.</text>
</comment>
<comment type="catalytic activity">
    <reaction evidence="1">
        <text>L-threonylcarbamoyladenylate + adenosine(37) in tRNA = N(6)-L-threonylcarbamoyladenosine(37) in tRNA + AMP + H(+)</text>
        <dbReference type="Rhea" id="RHEA:37059"/>
        <dbReference type="Rhea" id="RHEA-COMP:10162"/>
        <dbReference type="Rhea" id="RHEA-COMP:10163"/>
        <dbReference type="ChEBI" id="CHEBI:15378"/>
        <dbReference type="ChEBI" id="CHEBI:73682"/>
        <dbReference type="ChEBI" id="CHEBI:74411"/>
        <dbReference type="ChEBI" id="CHEBI:74418"/>
        <dbReference type="ChEBI" id="CHEBI:456215"/>
        <dbReference type="EC" id="2.3.1.234"/>
    </reaction>
</comment>
<comment type="cofactor">
    <cofactor evidence="1">
        <name>Fe(2+)</name>
        <dbReference type="ChEBI" id="CHEBI:29033"/>
    </cofactor>
    <text evidence="1">Binds 1 Fe(2+) ion per subunit.</text>
</comment>
<comment type="subcellular location">
    <subcellularLocation>
        <location evidence="1">Cytoplasm</location>
    </subcellularLocation>
</comment>
<comment type="similarity">
    <text evidence="1">Belongs to the KAE1 / TsaD family.</text>
</comment>
<organism>
    <name type="scientific">Tropheryma whipplei (strain Twist)</name>
    <name type="common">Whipple's bacillus</name>
    <dbReference type="NCBI Taxonomy" id="203267"/>
    <lineage>
        <taxon>Bacteria</taxon>
        <taxon>Bacillati</taxon>
        <taxon>Actinomycetota</taxon>
        <taxon>Actinomycetes</taxon>
        <taxon>Micrococcales</taxon>
        <taxon>Tropherymataceae</taxon>
        <taxon>Tropheryma</taxon>
    </lineage>
</organism>
<keyword id="KW-0012">Acyltransferase</keyword>
<keyword id="KW-0963">Cytoplasm</keyword>
<keyword id="KW-0408">Iron</keyword>
<keyword id="KW-0479">Metal-binding</keyword>
<keyword id="KW-1185">Reference proteome</keyword>
<keyword id="KW-0808">Transferase</keyword>
<keyword id="KW-0819">tRNA processing</keyword>
<protein>
    <recommendedName>
        <fullName evidence="1">tRNA N6-adenosine threonylcarbamoyltransferase</fullName>
        <ecNumber evidence="1">2.3.1.234</ecNumber>
    </recommendedName>
    <alternativeName>
        <fullName evidence="1">N6-L-threonylcarbamoyladenine synthase</fullName>
        <shortName evidence="1">t(6)A synthase</shortName>
    </alternativeName>
    <alternativeName>
        <fullName evidence="1">t(6)A37 threonylcarbamoyladenosine biosynthesis protein TsaD</fullName>
    </alternativeName>
    <alternativeName>
        <fullName evidence="1">tRNA threonylcarbamoyladenosine biosynthesis protein TsaD</fullName>
    </alternativeName>
</protein>
<accession>Q83FV5</accession>
<proteinExistence type="inferred from homology"/>
<sequence>MSIILGIETSCDETGVGIVSGSTVLANEVASSSLRHKPFGGVIPEIAARAHLEYLPNLLELALETAQLCIKDIDGIAVTAGPGLVTSLSVGVSAAKALGLSTGTPVYGVNHLVGHAVSAFLDDYTNDGLGVIHRRDSIGSNGIENDASSTHSHTHTTQVNRHSNLCVYTPPRRVLRDVCKYMHVRDSVVLLASGGHSCLLKIHNNKISLLGETLDDAAGEAFDKIARLMGLQYPGGPAIEMLASSGNPNAVEFPRALLTHFEEHNRYSFSFSGLKTAVGRVVERIKSNPAHSIPKIEDIAASFQEAVADVLTAKTVAAALASDVDLIVMGGGVAANNRIREMLCERAKIHGLDVKIPPIALCTDNGAMIAAAGSWLMQLGYNPSHSRFSPVSIMPLTQMVV</sequence>
<name>TSAD_TROWT</name>
<evidence type="ECO:0000255" key="1">
    <source>
        <dbReference type="HAMAP-Rule" id="MF_01445"/>
    </source>
</evidence>
<dbReference type="EC" id="2.3.1.234" evidence="1"/>
<dbReference type="EMBL" id="AE014184">
    <property type="protein sequence ID" value="AAO44688.1"/>
    <property type="molecule type" value="Genomic_DNA"/>
</dbReference>
<dbReference type="RefSeq" id="WP_011096130.1">
    <property type="nucleotide sequence ID" value="NC_004572.3"/>
</dbReference>
<dbReference type="SMR" id="Q83FV5"/>
<dbReference type="STRING" id="203267.TWT_591"/>
<dbReference type="GeneID" id="67387948"/>
<dbReference type="KEGG" id="twh:TWT_591"/>
<dbReference type="eggNOG" id="COG0533">
    <property type="taxonomic scope" value="Bacteria"/>
</dbReference>
<dbReference type="HOGENOM" id="CLU_023208_0_2_11"/>
<dbReference type="OrthoDB" id="9806197at2"/>
<dbReference type="Proteomes" id="UP000002200">
    <property type="component" value="Chromosome"/>
</dbReference>
<dbReference type="GO" id="GO:0005737">
    <property type="term" value="C:cytoplasm"/>
    <property type="evidence" value="ECO:0007669"/>
    <property type="project" value="UniProtKB-SubCell"/>
</dbReference>
<dbReference type="GO" id="GO:0005506">
    <property type="term" value="F:iron ion binding"/>
    <property type="evidence" value="ECO:0007669"/>
    <property type="project" value="UniProtKB-UniRule"/>
</dbReference>
<dbReference type="GO" id="GO:0061711">
    <property type="term" value="F:N(6)-L-threonylcarbamoyladenine synthase activity"/>
    <property type="evidence" value="ECO:0007669"/>
    <property type="project" value="UniProtKB-EC"/>
</dbReference>
<dbReference type="GO" id="GO:0002949">
    <property type="term" value="P:tRNA threonylcarbamoyladenosine modification"/>
    <property type="evidence" value="ECO:0007669"/>
    <property type="project" value="UniProtKB-UniRule"/>
</dbReference>
<dbReference type="FunFam" id="3.30.420.40:FF:000012">
    <property type="entry name" value="tRNA N6-adenosine threonylcarbamoyltransferase"/>
    <property type="match status" value="1"/>
</dbReference>
<dbReference type="FunFam" id="3.30.420.40:FF:000040">
    <property type="entry name" value="tRNA N6-adenosine threonylcarbamoyltransferase"/>
    <property type="match status" value="1"/>
</dbReference>
<dbReference type="Gene3D" id="3.30.420.40">
    <property type="match status" value="2"/>
</dbReference>
<dbReference type="HAMAP" id="MF_01445">
    <property type="entry name" value="TsaD"/>
    <property type="match status" value="1"/>
</dbReference>
<dbReference type="InterPro" id="IPR043129">
    <property type="entry name" value="ATPase_NBD"/>
</dbReference>
<dbReference type="InterPro" id="IPR000905">
    <property type="entry name" value="Gcp-like_dom"/>
</dbReference>
<dbReference type="InterPro" id="IPR017861">
    <property type="entry name" value="KAE1/TsaD"/>
</dbReference>
<dbReference type="InterPro" id="IPR022450">
    <property type="entry name" value="TsaD"/>
</dbReference>
<dbReference type="PANTHER" id="PTHR11735">
    <property type="entry name" value="TRNA N6-ADENOSINE THREONYLCARBAMOYLTRANSFERASE"/>
    <property type="match status" value="1"/>
</dbReference>
<dbReference type="PANTHER" id="PTHR11735:SF6">
    <property type="entry name" value="TRNA N6-ADENOSINE THREONYLCARBAMOYLTRANSFERASE, MITOCHONDRIAL"/>
    <property type="match status" value="1"/>
</dbReference>
<dbReference type="Pfam" id="PF00814">
    <property type="entry name" value="TsaD"/>
    <property type="match status" value="2"/>
</dbReference>
<dbReference type="PRINTS" id="PR00789">
    <property type="entry name" value="OSIALOPTASE"/>
</dbReference>
<dbReference type="SUPFAM" id="SSF53067">
    <property type="entry name" value="Actin-like ATPase domain"/>
    <property type="match status" value="2"/>
</dbReference>